<reference key="1">
    <citation type="journal article" date="1995" name="Mol. Gen. Genet.">
        <title>The agr P2 operon: an autocatalytic sensory transduction system in Staphylococcus aureus.</title>
        <authorList>
            <person name="Novick R.P."/>
            <person name="Projan S.J."/>
            <person name="Kornblum J."/>
            <person name="Ross H.F."/>
            <person name="Ji G."/>
            <person name="Kreiswirth B."/>
            <person name="Vandenesch F."/>
            <person name="Moghazeh S."/>
        </authorList>
    </citation>
    <scope>NUCLEOTIDE SEQUENCE [GENOMIC DNA]</scope>
    <source>
        <strain>Isolate GAL</strain>
    </source>
</reference>
<reference key="2">
    <citation type="journal article" date="1980" name="FEBS Lett.">
        <title>The amino acid sequence of the delta haemolysin of Staphylococcus aureus.</title>
        <authorList>
            <person name="Fitton J.E."/>
            <person name="Dell A."/>
            <person name="Shaw W.V."/>
        </authorList>
    </citation>
    <scope>PROTEIN SEQUENCE</scope>
    <scope>FORMYLATION AT MET-1</scope>
    <source>
        <strain>186X</strain>
    </source>
</reference>
<reference key="3">
    <citation type="journal article" date="1984" name="FEBS Lett.">
        <title>The amino acid sequence of delta haemolysin purified from a canine isolate of S. aureus.</title>
        <authorList>
            <person name="Fitton J.E."/>
            <person name="Hunt D.F."/>
            <person name="Marasco J."/>
            <person name="Shabanowitz J."/>
            <person name="Winston S."/>
            <person name="Dell A."/>
        </authorList>
    </citation>
    <scope>PROTEIN SEQUENCE</scope>
    <source>
        <strain>Canine variant</strain>
    </source>
</reference>
<reference key="4">
    <citation type="journal article" date="1990" name="Proteins">
        <title>Models of delta-hemolysin membrane channels and crystal structures.</title>
        <authorList>
            <person name="Raghunathan G."/>
            <person name="Seetharamulu P."/>
            <person name="Brooks B.R."/>
            <person name="Guy H.R."/>
        </authorList>
    </citation>
    <scope>3D-STRUCTURE MODELING</scope>
</reference>
<accession>P0C1V1</accession>
<accession>P01506</accession>
<accession>P0A0M3</accession>
<keyword id="KW-0002">3D-structure</keyword>
<keyword id="KW-0204">Cytolysis</keyword>
<keyword id="KW-0903">Direct protein sequencing</keyword>
<keyword id="KW-0291">Formylation</keyword>
<keyword id="KW-0354">Hemolysis</keyword>
<keyword id="KW-1032">Host cell membrane</keyword>
<keyword id="KW-1043">Host membrane</keyword>
<keyword id="KW-0472">Membrane</keyword>
<keyword id="KW-0964">Secreted</keyword>
<keyword id="KW-0800">Toxin</keyword>
<keyword id="KW-0812">Transmembrane</keyword>
<keyword id="KW-0843">Virulence</keyword>
<protein>
    <recommendedName>
        <fullName>Delta-hemolysin</fullName>
        <shortName>Delta-lysin</shortName>
    </recommendedName>
    <alternativeName>
        <fullName>Delta-toxin</fullName>
    </alternativeName>
</protein>
<evidence type="ECO:0000269" key="1">
    <source>
    </source>
</evidence>
<evidence type="ECO:0000305" key="2"/>
<evidence type="ECO:0007829" key="3">
    <source>
        <dbReference type="PDB" id="1DTC"/>
    </source>
</evidence>
<feature type="peptide" id="PRO_0000035648" description="Delta-hemolysin">
    <location>
        <begin position="1"/>
        <end position="26"/>
    </location>
</feature>
<feature type="modified residue" description="N-formylmethionine" evidence="1">
    <location>
        <position position="1"/>
    </location>
</feature>
<feature type="sequence variant" description="In strain: canine.">
    <original>Q</original>
    <variation>A</variation>
    <location>
        <position position="3"/>
    </location>
</feature>
<feature type="sequence variant" description="In strain: canine.">
    <original>GDL</original>
    <variation>VEF</variation>
    <location>
        <begin position="10"/>
        <end position="12"/>
    </location>
</feature>
<feature type="sequence variant" description="In strain: canine.">
    <original>W</original>
    <variation>L</variation>
    <location>
        <position position="15"/>
    </location>
</feature>
<feature type="sequence variant" description="In strain: canine.">
    <original>ID</original>
    <variation>AE</variation>
    <location>
        <begin position="17"/>
        <end position="18"/>
    </location>
</feature>
<feature type="sequence variant" description="In strain: canine.">
    <original>N</original>
    <variation>E</variation>
    <location>
        <position position="21"/>
    </location>
</feature>
<feature type="sequence variant" description="In strain: canine.">
    <original>T</original>
    <variation>I</variation>
    <location>
        <position position="24"/>
    </location>
</feature>
<feature type="helix" evidence="3">
    <location>
        <begin position="2"/>
        <end position="22"/>
    </location>
</feature>
<comment type="function">
    <text>Lyses erythrocytes and many other mammalian cells.</text>
</comment>
<comment type="subcellular location">
    <subcellularLocation>
        <location>Secreted</location>
    </subcellularLocation>
    <subcellularLocation>
        <location>Host cell membrane</location>
    </subcellularLocation>
    <text>In infected cells, it is found in the membrane.</text>
</comment>
<comment type="similarity">
    <text evidence="2">Belongs to the delta-lysin family.</text>
</comment>
<comment type="sequence caution" evidence="2">
    <conflict type="erroneous initiation">
        <sequence resource="EMBL-CDS" id="CAA36780"/>
    </conflict>
</comment>
<proteinExistence type="evidence at protein level"/>
<sequence>MAQDIISTIGDLVKWIIDTVNKFTKK</sequence>
<gene>
    <name type="primary">hld</name>
</gene>
<dbReference type="EMBL" id="X52543">
    <property type="protein sequence ID" value="CAA36780.1"/>
    <property type="status" value="ALT_INIT"/>
    <property type="molecule type" value="Genomic_DNA"/>
</dbReference>
<dbReference type="PIR" id="A01767">
    <property type="entry name" value="LESAD"/>
</dbReference>
<dbReference type="RefSeq" id="WP_000046022.1">
    <property type="nucleotide sequence ID" value="NZ_WWFQ01000007.1"/>
</dbReference>
<dbReference type="PDB" id="1DTC">
    <property type="method" value="NMR"/>
    <property type="chains" value="A=1-26"/>
</dbReference>
<dbReference type="PDB" id="2DTB">
    <property type="method" value="NMR"/>
    <property type="chains" value="A=1-26"/>
</dbReference>
<dbReference type="PDB" id="2KAM">
    <property type="method" value="NMR"/>
    <property type="chains" value="A=1-26"/>
</dbReference>
<dbReference type="PDBsum" id="1DTC"/>
<dbReference type="PDBsum" id="2DTB"/>
<dbReference type="PDBsum" id="2KAM"/>
<dbReference type="BMRB" id="P0C1V1"/>
<dbReference type="SMR" id="P0C1V1"/>
<dbReference type="DrugBank" id="DB04464">
    <property type="generic name" value="N-Formylmethionine"/>
</dbReference>
<dbReference type="TCDB" id="1.C.122.1.1">
    <property type="family name" value="the pore-forming delta-hemolysin (hld) family"/>
</dbReference>
<dbReference type="GeneID" id="98347068"/>
<dbReference type="EvolutionaryTrace" id="P0C1V1"/>
<dbReference type="PRO" id="PR:P0C1V1"/>
<dbReference type="GO" id="GO:0005576">
    <property type="term" value="C:extracellular region"/>
    <property type="evidence" value="ECO:0007669"/>
    <property type="project" value="UniProtKB-SubCell"/>
</dbReference>
<dbReference type="GO" id="GO:0020002">
    <property type="term" value="C:host cell plasma membrane"/>
    <property type="evidence" value="ECO:0007669"/>
    <property type="project" value="UniProtKB-SubCell"/>
</dbReference>
<dbReference type="GO" id="GO:0016020">
    <property type="term" value="C:membrane"/>
    <property type="evidence" value="ECO:0007669"/>
    <property type="project" value="UniProtKB-KW"/>
</dbReference>
<dbReference type="GO" id="GO:0090729">
    <property type="term" value="F:toxin activity"/>
    <property type="evidence" value="ECO:0007669"/>
    <property type="project" value="UniProtKB-KW"/>
</dbReference>
<dbReference type="GO" id="GO:0019836">
    <property type="term" value="P:symbiont-mediated hemolysis of host erythrocyte"/>
    <property type="evidence" value="ECO:0007669"/>
    <property type="project" value="InterPro"/>
</dbReference>
<dbReference type="InterPro" id="IPR008034">
    <property type="entry name" value="Delta_lysin"/>
</dbReference>
<dbReference type="NCBIfam" id="NF011336">
    <property type="entry name" value="PRK14752.1-1"/>
    <property type="match status" value="1"/>
</dbReference>
<dbReference type="NCBIfam" id="NF011338">
    <property type="entry name" value="PRK14752.1-4"/>
    <property type="match status" value="1"/>
</dbReference>
<dbReference type="Pfam" id="PF05372">
    <property type="entry name" value="Delta_lysin"/>
    <property type="match status" value="1"/>
</dbReference>
<organism>
    <name type="scientific">Staphylococcus aureus</name>
    <dbReference type="NCBI Taxonomy" id="1280"/>
    <lineage>
        <taxon>Bacteria</taxon>
        <taxon>Bacillati</taxon>
        <taxon>Bacillota</taxon>
        <taxon>Bacilli</taxon>
        <taxon>Bacillales</taxon>
        <taxon>Staphylococcaceae</taxon>
        <taxon>Staphylococcus</taxon>
    </lineage>
</organism>
<name>HLD_STAAU</name>